<dbReference type="EC" id="3.1.3.15" evidence="3 4"/>
<dbReference type="EC" id="4.2.1.19" evidence="1 3"/>
<dbReference type="EMBL" id="CP001769">
    <property type="protein sequence ID" value="ADB39454.1"/>
    <property type="molecule type" value="Genomic_DNA"/>
</dbReference>
<dbReference type="SMR" id="D2QPE6"/>
<dbReference type="STRING" id="504472.Slin_3446"/>
<dbReference type="KEGG" id="sli:Slin_3446"/>
<dbReference type="eggNOG" id="COG0131">
    <property type="taxonomic scope" value="Bacteria"/>
</dbReference>
<dbReference type="eggNOG" id="COG0241">
    <property type="taxonomic scope" value="Bacteria"/>
</dbReference>
<dbReference type="HOGENOM" id="CLU_044308_0_0_10"/>
<dbReference type="UniPathway" id="UPA00031">
    <property type="reaction ID" value="UER00011"/>
</dbReference>
<dbReference type="UniPathway" id="UPA00031">
    <property type="reaction ID" value="UER00013"/>
</dbReference>
<dbReference type="Proteomes" id="UP000002028">
    <property type="component" value="Chromosome"/>
</dbReference>
<dbReference type="GO" id="GO:0005737">
    <property type="term" value="C:cytoplasm"/>
    <property type="evidence" value="ECO:0007669"/>
    <property type="project" value="UniProtKB-SubCell"/>
</dbReference>
<dbReference type="GO" id="GO:0004401">
    <property type="term" value="F:histidinol-phosphatase activity"/>
    <property type="evidence" value="ECO:0007669"/>
    <property type="project" value="UniProtKB-UniRule"/>
</dbReference>
<dbReference type="GO" id="GO:0004424">
    <property type="term" value="F:imidazoleglycerol-phosphate dehydratase activity"/>
    <property type="evidence" value="ECO:0007669"/>
    <property type="project" value="UniProtKB-UniRule"/>
</dbReference>
<dbReference type="GO" id="GO:0046872">
    <property type="term" value="F:metal ion binding"/>
    <property type="evidence" value="ECO:0007669"/>
    <property type="project" value="UniProtKB-KW"/>
</dbReference>
<dbReference type="GO" id="GO:0000105">
    <property type="term" value="P:L-histidine biosynthetic process"/>
    <property type="evidence" value="ECO:0007669"/>
    <property type="project" value="UniProtKB-UniRule"/>
</dbReference>
<dbReference type="CDD" id="cd07914">
    <property type="entry name" value="IGPD"/>
    <property type="match status" value="1"/>
</dbReference>
<dbReference type="FunFam" id="3.30.230.40:FF:000001">
    <property type="entry name" value="Imidazoleglycerol-phosphate dehydratase HisB"/>
    <property type="match status" value="1"/>
</dbReference>
<dbReference type="FunFam" id="3.30.230.40:FF:000003">
    <property type="entry name" value="Imidazoleglycerol-phosphate dehydratase HisB"/>
    <property type="match status" value="1"/>
</dbReference>
<dbReference type="Gene3D" id="3.40.50.1000">
    <property type="entry name" value="HAD superfamily/HAD-like"/>
    <property type="match status" value="1"/>
</dbReference>
<dbReference type="Gene3D" id="3.30.230.40">
    <property type="entry name" value="Imidazole glycerol phosphate dehydratase, domain 1"/>
    <property type="match status" value="2"/>
</dbReference>
<dbReference type="HAMAP" id="MF_01022">
    <property type="entry name" value="Bifunc_HisB"/>
    <property type="match status" value="1"/>
</dbReference>
<dbReference type="HAMAP" id="MF_00076">
    <property type="entry name" value="HisB"/>
    <property type="match status" value="1"/>
</dbReference>
<dbReference type="InterPro" id="IPR036412">
    <property type="entry name" value="HAD-like_sf"/>
</dbReference>
<dbReference type="InterPro" id="IPR006549">
    <property type="entry name" value="HAD-SF_hydro_IIIA"/>
</dbReference>
<dbReference type="InterPro" id="IPR023214">
    <property type="entry name" value="HAD_sf"/>
</dbReference>
<dbReference type="InterPro" id="IPR020566">
    <property type="entry name" value="His_synth_bifunc_HisB"/>
</dbReference>
<dbReference type="InterPro" id="IPR005954">
    <property type="entry name" value="HisB_N"/>
</dbReference>
<dbReference type="InterPro" id="IPR006543">
    <property type="entry name" value="Histidinol-phos"/>
</dbReference>
<dbReference type="InterPro" id="IPR038494">
    <property type="entry name" value="IGPD_sf"/>
</dbReference>
<dbReference type="InterPro" id="IPR000807">
    <property type="entry name" value="ImidazoleglycerolP_deHydtase"/>
</dbReference>
<dbReference type="InterPro" id="IPR020565">
    <property type="entry name" value="ImidazoleglycerP_deHydtase_CS"/>
</dbReference>
<dbReference type="InterPro" id="IPR013954">
    <property type="entry name" value="PNK3P"/>
</dbReference>
<dbReference type="InterPro" id="IPR020568">
    <property type="entry name" value="Ribosomal_Su5_D2-typ_SF"/>
</dbReference>
<dbReference type="NCBIfam" id="TIGR01662">
    <property type="entry name" value="HAD-SF-IIIA"/>
    <property type="match status" value="1"/>
</dbReference>
<dbReference type="NCBIfam" id="TIGR01261">
    <property type="entry name" value="hisB_Nterm"/>
    <property type="match status" value="1"/>
</dbReference>
<dbReference type="NCBIfam" id="TIGR01656">
    <property type="entry name" value="Histidinol-ppas"/>
    <property type="match status" value="1"/>
</dbReference>
<dbReference type="NCBIfam" id="NF002111">
    <property type="entry name" value="PRK00951.2-1"/>
    <property type="match status" value="1"/>
</dbReference>
<dbReference type="NCBIfam" id="NF002114">
    <property type="entry name" value="PRK00951.2-4"/>
    <property type="match status" value="1"/>
</dbReference>
<dbReference type="NCBIfam" id="NF003937">
    <property type="entry name" value="PRK05446.1"/>
    <property type="match status" value="1"/>
</dbReference>
<dbReference type="PANTHER" id="PTHR23133:SF2">
    <property type="entry name" value="IMIDAZOLEGLYCEROL-PHOSPHATE DEHYDRATASE"/>
    <property type="match status" value="1"/>
</dbReference>
<dbReference type="PANTHER" id="PTHR23133">
    <property type="entry name" value="IMIDAZOLEGLYCEROL-PHOSPHATE DEHYDRATASE HIS7"/>
    <property type="match status" value="1"/>
</dbReference>
<dbReference type="Pfam" id="PF00475">
    <property type="entry name" value="IGPD"/>
    <property type="match status" value="1"/>
</dbReference>
<dbReference type="Pfam" id="PF08645">
    <property type="entry name" value="PNK3P"/>
    <property type="match status" value="1"/>
</dbReference>
<dbReference type="SUPFAM" id="SSF56784">
    <property type="entry name" value="HAD-like"/>
    <property type="match status" value="1"/>
</dbReference>
<dbReference type="SUPFAM" id="SSF54211">
    <property type="entry name" value="Ribosomal protein S5 domain 2-like"/>
    <property type="match status" value="2"/>
</dbReference>
<dbReference type="PROSITE" id="PS00954">
    <property type="entry name" value="IGP_DEHYDRATASE_1"/>
    <property type="match status" value="1"/>
</dbReference>
<dbReference type="PROSITE" id="PS00955">
    <property type="entry name" value="IGP_DEHYDRATASE_2"/>
    <property type="match status" value="1"/>
</dbReference>
<name>HIS7_SPILD</name>
<keyword id="KW-0028">Amino-acid biosynthesis</keyword>
<keyword id="KW-0963">Cytoplasm</keyword>
<keyword id="KW-0368">Histidine biosynthesis</keyword>
<keyword id="KW-0378">Hydrolase</keyword>
<keyword id="KW-0456">Lyase</keyword>
<keyword id="KW-0460">Magnesium</keyword>
<keyword id="KW-0479">Metal-binding</keyword>
<keyword id="KW-0511">Multifunctional enzyme</keyword>
<protein>
    <recommendedName>
        <fullName evidence="3">Histidine biosynthesis bifunctional protein HisB</fullName>
    </recommendedName>
    <domain>
        <recommendedName>
            <fullName evidence="3 5">Histidinol-phosphatase</fullName>
            <ecNumber evidence="3 4">3.1.3.15</ecNumber>
        </recommendedName>
    </domain>
    <domain>
        <recommendedName>
            <fullName evidence="1 3">Imidazoleglycerol-phosphate dehydratase</fullName>
            <shortName evidence="1 3">IGPD</shortName>
            <ecNumber evidence="1 3">4.2.1.19</ecNumber>
        </recommendedName>
    </domain>
</protein>
<gene>
    <name evidence="1 3" type="primary">hisB</name>
    <name evidence="7" type="ordered locus">Slin_3446</name>
</gene>
<organism evidence="8">
    <name type="scientific">Spirosoma linguale (strain ATCC 33905 / DSM 74 / LMG 10896 / Claus 1)</name>
    <dbReference type="NCBI Taxonomy" id="504472"/>
    <lineage>
        <taxon>Bacteria</taxon>
        <taxon>Pseudomonadati</taxon>
        <taxon>Bacteroidota</taxon>
        <taxon>Cytophagia</taxon>
        <taxon>Cytophagales</taxon>
        <taxon>Cytophagaceae</taxon>
        <taxon>Spirosoma</taxon>
    </lineage>
</organism>
<evidence type="ECO:0000250" key="1">
    <source>
        <dbReference type="UniProtKB" id="P06987"/>
    </source>
</evidence>
<evidence type="ECO:0000250" key="2">
    <source>
        <dbReference type="UniProtKB" id="Q9S5G5"/>
    </source>
</evidence>
<evidence type="ECO:0000255" key="3">
    <source>
        <dbReference type="HAMAP-Rule" id="MF_01022"/>
    </source>
</evidence>
<evidence type="ECO:0000269" key="4">
    <source>
    </source>
</evidence>
<evidence type="ECO:0000303" key="5">
    <source>
    </source>
</evidence>
<evidence type="ECO:0000305" key="6"/>
<evidence type="ECO:0000312" key="7">
    <source>
        <dbReference type="EMBL" id="ADB39454.1"/>
    </source>
</evidence>
<evidence type="ECO:0000312" key="8">
    <source>
        <dbReference type="Proteomes" id="UP000002028"/>
    </source>
</evidence>
<proteinExistence type="evidence at protein level"/>
<reference evidence="8" key="1">
    <citation type="submission" date="2009-09" db="EMBL/GenBank/DDBJ databases">
        <title>The complete chromosome of Spirosoma linguale DSM 74.</title>
        <authorList>
            <consortium name="US DOE Joint Genome Institute (JGI-PGF)"/>
            <person name="Lucas S."/>
            <person name="Copeland A."/>
            <person name="Lapidus A."/>
            <person name="Glavina del Rio T."/>
            <person name="Dalin E."/>
            <person name="Tice H."/>
            <person name="Bruce D."/>
            <person name="Goodwin L."/>
            <person name="Pitluck S."/>
            <person name="Kyrpides N."/>
            <person name="Mavromatis K."/>
            <person name="Mikhailova N."/>
            <person name="Ovchinnikova G."/>
            <person name="Saunders E."/>
            <person name="Brettin T."/>
            <person name="Detter J.C."/>
            <person name="Han C."/>
            <person name="Larimer F."/>
            <person name="Land M."/>
            <person name="Hauser L."/>
            <person name="Markowitz V."/>
            <person name="Cheng J.-F."/>
            <person name="Hugenholtz P."/>
            <person name="Woyke T."/>
            <person name="Wu D."/>
            <person name="Tindal B."/>
            <person name="Schutze A."/>
            <person name="Schneider S."/>
            <person name="Goker M."/>
            <person name="Klenk H.-P."/>
            <person name="Eisen J.A."/>
        </authorList>
    </citation>
    <scope>NUCLEOTIDE SEQUENCE [LARGE SCALE GENOMIC DNA]</scope>
    <source>
        <strain evidence="8">ATCC 33905 / DSM 74 / LMG 10896 / Claus 1</strain>
    </source>
</reference>
<reference evidence="6" key="2">
    <citation type="journal article" date="2015" name="Proc. Natl. Acad. Sci. U.S.A.">
        <title>Panoramic view of a superfamily of phosphatases through substrate profiling.</title>
        <authorList>
            <person name="Huang H."/>
            <person name="Pandya C."/>
            <person name="Liu C."/>
            <person name="Al-Obaidi N.F."/>
            <person name="Wang M."/>
            <person name="Zheng L."/>
            <person name="Toews Keating S."/>
            <person name="Aono M."/>
            <person name="Love J.D."/>
            <person name="Evans B."/>
            <person name="Seidel R.D."/>
            <person name="Hillerich B.S."/>
            <person name="Garforth S.J."/>
            <person name="Almo S.C."/>
            <person name="Mariano P.S."/>
            <person name="Dunaway-Mariano D."/>
            <person name="Allen K.N."/>
            <person name="Farelli J.D."/>
        </authorList>
    </citation>
    <scope>CATALYTIC ACTIVITY</scope>
    <scope>COFACTOR</scope>
</reference>
<feature type="chain" id="PRO_0000435610" description="Histidine biosynthesis bifunctional protein HisB" evidence="6">
    <location>
        <begin position="1"/>
        <end position="382"/>
    </location>
</feature>
<feature type="region of interest" description="Histidinol-phosphatase" evidence="1 3">
    <location>
        <begin position="1"/>
        <end position="190"/>
    </location>
</feature>
<feature type="region of interest" description="Imidazoleglycerol-phosphate dehydratase" evidence="1 3">
    <location>
        <begin position="191"/>
        <end position="382"/>
    </location>
</feature>
<feature type="active site" description="Nucleophile" evidence="3 6">
    <location>
        <position position="8"/>
    </location>
</feature>
<feature type="active site" description="Proton donor" evidence="3 6">
    <location>
        <position position="10"/>
    </location>
</feature>
<feature type="binding site" evidence="2 3">
    <location>
        <position position="8"/>
    </location>
    <ligand>
        <name>Mg(2+)</name>
        <dbReference type="ChEBI" id="CHEBI:18420"/>
    </ligand>
</feature>
<feature type="binding site" evidence="2 3">
    <location>
        <position position="10"/>
    </location>
    <ligand>
        <name>Mg(2+)</name>
        <dbReference type="ChEBI" id="CHEBI:18420"/>
    </ligand>
</feature>
<feature type="binding site" evidence="2 3">
    <location>
        <position position="129"/>
    </location>
    <ligand>
        <name>Mg(2+)</name>
        <dbReference type="ChEBI" id="CHEBI:18420"/>
    </ligand>
</feature>
<comment type="catalytic activity">
    <reaction evidence="3">
        <text>D-erythro-1-(imidazol-4-yl)glycerol 3-phosphate = 3-(imidazol-4-yl)-2-oxopropyl phosphate + H2O</text>
        <dbReference type="Rhea" id="RHEA:11040"/>
        <dbReference type="ChEBI" id="CHEBI:15377"/>
        <dbReference type="ChEBI" id="CHEBI:57766"/>
        <dbReference type="ChEBI" id="CHEBI:58278"/>
        <dbReference type="EC" id="4.2.1.19"/>
    </reaction>
</comment>
<comment type="catalytic activity">
    <reaction evidence="3 4">
        <text>L-histidinol phosphate + H2O = L-histidinol + phosphate</text>
        <dbReference type="Rhea" id="RHEA:14465"/>
        <dbReference type="ChEBI" id="CHEBI:15377"/>
        <dbReference type="ChEBI" id="CHEBI:43474"/>
        <dbReference type="ChEBI" id="CHEBI:57699"/>
        <dbReference type="ChEBI" id="CHEBI:57980"/>
        <dbReference type="EC" id="3.1.3.15"/>
    </reaction>
</comment>
<comment type="cofactor">
    <cofactor evidence="3 4">
        <name>Mg(2+)</name>
        <dbReference type="ChEBI" id="CHEBI:18420"/>
    </cofactor>
    <text evidence="2">Binds 2 Mg(2+) ions.</text>
</comment>
<comment type="pathway">
    <text evidence="3">Amino-acid biosynthesis; L-histidine biosynthesis; L-histidine from 5-phospho-alpha-D-ribose 1-diphosphate: step 6/9.</text>
</comment>
<comment type="pathway">
    <text evidence="3">Amino-acid biosynthesis; L-histidine biosynthesis; L-histidine from 5-phospho-alpha-D-ribose 1-diphosphate: step 8/9.</text>
</comment>
<comment type="subcellular location">
    <subcellularLocation>
        <location evidence="3">Cytoplasm</location>
    </subcellularLocation>
</comment>
<comment type="similarity">
    <text evidence="3 6">In the N-terminal section; belongs to the histidinol-phosphatase family.</text>
</comment>
<comment type="similarity">
    <text evidence="3 6">In the C-terminal section; belongs to the imidazoleglycerol-phosphate dehydratase family.</text>
</comment>
<accession>D2QPE6</accession>
<sequence>MQKIVFIDRDGTLIAEPQPDQQVDSLAKLDFIPKAISAMRKIAEDTTYELVMVTNQDGLGTGSFPEDTFWPAHNKMMSTFAGENVNFAAVHIDRHFPHDNSSTRKPGVGMLTQYFEASYDLTNSFVIGDRLTDVQLAVNLGAKAILFMPPNGLAAVQSADVSGLTEAMKQAIVLQTGDWDEIYEFLRLPARTALVERNTKETQIRVELNLDGRGRADMHTGLGFFDHMLDQVAKHSGADLAIHVNGDLHIDEHHTIEDTALALGEAYRRALGDKRGISRYGFLLPMDEALAQVGIDFSGRPWLVWDAEFKREKIGDMPTEMFYHFFKSFSDTALCNLNIKVEGDNEHHKIEAIFKAFAKAIKMAVRRDINELDNLPSTKGVL</sequence>